<protein>
    <recommendedName>
        <fullName evidence="1">Lipoyl synthase</fullName>
        <ecNumber evidence="1">2.8.1.8</ecNumber>
    </recommendedName>
    <alternativeName>
        <fullName evidence="1">Lip-syn</fullName>
        <shortName evidence="1">LS</shortName>
    </alternativeName>
    <alternativeName>
        <fullName evidence="1">Lipoate synthase</fullName>
    </alternativeName>
    <alternativeName>
        <fullName evidence="1">Lipoic acid synthase</fullName>
    </alternativeName>
    <alternativeName>
        <fullName evidence="1">Sulfur insertion protein LipA</fullName>
    </alternativeName>
</protein>
<name>LIPA_RHIEC</name>
<proteinExistence type="inferred from homology"/>
<comment type="function">
    <text evidence="1">Catalyzes the radical-mediated insertion of two sulfur atoms into the C-6 and C-8 positions of the octanoyl moiety bound to the lipoyl domains of lipoate-dependent enzymes, thereby converting the octanoylated domains into lipoylated derivatives.</text>
</comment>
<comment type="catalytic activity">
    <reaction evidence="1">
        <text>[[Fe-S] cluster scaffold protein carrying a second [4Fe-4S](2+) cluster] + N(6)-octanoyl-L-lysyl-[protein] + 2 oxidized [2Fe-2S]-[ferredoxin] + 2 S-adenosyl-L-methionine + 4 H(+) = [[Fe-S] cluster scaffold protein] + N(6)-[(R)-dihydrolipoyl]-L-lysyl-[protein] + 4 Fe(3+) + 2 hydrogen sulfide + 2 5'-deoxyadenosine + 2 L-methionine + 2 reduced [2Fe-2S]-[ferredoxin]</text>
        <dbReference type="Rhea" id="RHEA:16585"/>
        <dbReference type="Rhea" id="RHEA-COMP:9928"/>
        <dbReference type="Rhea" id="RHEA-COMP:10000"/>
        <dbReference type="Rhea" id="RHEA-COMP:10001"/>
        <dbReference type="Rhea" id="RHEA-COMP:10475"/>
        <dbReference type="Rhea" id="RHEA-COMP:14568"/>
        <dbReference type="Rhea" id="RHEA-COMP:14569"/>
        <dbReference type="ChEBI" id="CHEBI:15378"/>
        <dbReference type="ChEBI" id="CHEBI:17319"/>
        <dbReference type="ChEBI" id="CHEBI:29034"/>
        <dbReference type="ChEBI" id="CHEBI:29919"/>
        <dbReference type="ChEBI" id="CHEBI:33722"/>
        <dbReference type="ChEBI" id="CHEBI:33737"/>
        <dbReference type="ChEBI" id="CHEBI:33738"/>
        <dbReference type="ChEBI" id="CHEBI:57844"/>
        <dbReference type="ChEBI" id="CHEBI:59789"/>
        <dbReference type="ChEBI" id="CHEBI:78809"/>
        <dbReference type="ChEBI" id="CHEBI:83100"/>
        <dbReference type="EC" id="2.8.1.8"/>
    </reaction>
</comment>
<comment type="cofactor">
    <cofactor evidence="1">
        <name>[4Fe-4S] cluster</name>
        <dbReference type="ChEBI" id="CHEBI:49883"/>
    </cofactor>
    <text evidence="1">Binds 2 [4Fe-4S] clusters per subunit. One cluster is coordinated with 3 cysteines and an exchangeable S-adenosyl-L-methionine.</text>
</comment>
<comment type="pathway">
    <text evidence="1">Protein modification; protein lipoylation via endogenous pathway; protein N(6)-(lipoyl)lysine from octanoyl-[acyl-carrier-protein]: step 2/2.</text>
</comment>
<comment type="subcellular location">
    <subcellularLocation>
        <location evidence="1">Cytoplasm</location>
    </subcellularLocation>
</comment>
<comment type="similarity">
    <text evidence="1">Belongs to the radical SAM superfamily. Lipoyl synthase family.</text>
</comment>
<accession>Q2K8V9</accession>
<accession>O05941</accession>
<evidence type="ECO:0000255" key="1">
    <source>
        <dbReference type="HAMAP-Rule" id="MF_00206"/>
    </source>
</evidence>
<evidence type="ECO:0000255" key="2">
    <source>
        <dbReference type="PROSITE-ProRule" id="PRU01266"/>
    </source>
</evidence>
<evidence type="ECO:0000305" key="3"/>
<sequence length="323" mass="36218">MVTILDTINPDAKRVRHPEKAHRPDTEVMRKPDWIRVKAPTSKGYAETRAIVKEHKLVTVCEEAGCPNIGECWDKKHATFMIMGEICTRACAFCNVATGKPNALDMDEPENVAKAVREMGLSHVVITSVDRDDLEDGGAEHFEKVIWAIRSASPATTIEILTPDFLKKPGALERVVAAKPDVFNHNMETVAGNYLTVRPGARYFHSIRLLQRVKELDPTMFTKSGIMVGLGEERNEVLQLMDDLRTADVDFLTIGQYLQPTRKHHKVESFVTPEEFKSYETVAYSKGFLMVASSPLTRSSHHAGDDFARLRAAREKKLLMAAE</sequence>
<organism>
    <name type="scientific">Rhizobium etli (strain ATCC 51251 / DSM 11541 / JCM 21823 / NBRC 15573 / CFN 42)</name>
    <dbReference type="NCBI Taxonomy" id="347834"/>
    <lineage>
        <taxon>Bacteria</taxon>
        <taxon>Pseudomonadati</taxon>
        <taxon>Pseudomonadota</taxon>
        <taxon>Alphaproteobacteria</taxon>
        <taxon>Hyphomicrobiales</taxon>
        <taxon>Rhizobiaceae</taxon>
        <taxon>Rhizobium/Agrobacterium group</taxon>
        <taxon>Rhizobium</taxon>
    </lineage>
</organism>
<dbReference type="EC" id="2.8.1.8" evidence="1"/>
<dbReference type="EMBL" id="Y11708">
    <property type="protein sequence ID" value="CAA72400.1"/>
    <property type="molecule type" value="Genomic_DNA"/>
</dbReference>
<dbReference type="EMBL" id="CP000133">
    <property type="protein sequence ID" value="ABC90727.1"/>
    <property type="molecule type" value="Genomic_DNA"/>
</dbReference>
<dbReference type="RefSeq" id="WP_011425217.1">
    <property type="nucleotide sequence ID" value="NC_007761.1"/>
</dbReference>
<dbReference type="SMR" id="Q2K8V9"/>
<dbReference type="KEGG" id="ret:RHE_CH01941"/>
<dbReference type="eggNOG" id="COG0320">
    <property type="taxonomic scope" value="Bacteria"/>
</dbReference>
<dbReference type="HOGENOM" id="CLU_033144_2_1_5"/>
<dbReference type="OrthoDB" id="9787898at2"/>
<dbReference type="UniPathway" id="UPA00538">
    <property type="reaction ID" value="UER00593"/>
</dbReference>
<dbReference type="Proteomes" id="UP000001936">
    <property type="component" value="Chromosome"/>
</dbReference>
<dbReference type="GO" id="GO:0005737">
    <property type="term" value="C:cytoplasm"/>
    <property type="evidence" value="ECO:0007669"/>
    <property type="project" value="UniProtKB-SubCell"/>
</dbReference>
<dbReference type="GO" id="GO:0051539">
    <property type="term" value="F:4 iron, 4 sulfur cluster binding"/>
    <property type="evidence" value="ECO:0007669"/>
    <property type="project" value="UniProtKB-UniRule"/>
</dbReference>
<dbReference type="GO" id="GO:0016992">
    <property type="term" value="F:lipoate synthase activity"/>
    <property type="evidence" value="ECO:0007669"/>
    <property type="project" value="UniProtKB-UniRule"/>
</dbReference>
<dbReference type="GO" id="GO:0046872">
    <property type="term" value="F:metal ion binding"/>
    <property type="evidence" value="ECO:0007669"/>
    <property type="project" value="UniProtKB-KW"/>
</dbReference>
<dbReference type="CDD" id="cd01335">
    <property type="entry name" value="Radical_SAM"/>
    <property type="match status" value="1"/>
</dbReference>
<dbReference type="FunFam" id="3.20.20.70:FF:000186">
    <property type="entry name" value="Lipoyl synthase"/>
    <property type="match status" value="1"/>
</dbReference>
<dbReference type="Gene3D" id="3.20.20.70">
    <property type="entry name" value="Aldolase class I"/>
    <property type="match status" value="1"/>
</dbReference>
<dbReference type="HAMAP" id="MF_00206">
    <property type="entry name" value="Lipoyl_synth"/>
    <property type="match status" value="1"/>
</dbReference>
<dbReference type="InterPro" id="IPR013785">
    <property type="entry name" value="Aldolase_TIM"/>
</dbReference>
<dbReference type="InterPro" id="IPR006638">
    <property type="entry name" value="Elp3/MiaA/NifB-like_rSAM"/>
</dbReference>
<dbReference type="InterPro" id="IPR031691">
    <property type="entry name" value="LIAS_N"/>
</dbReference>
<dbReference type="InterPro" id="IPR003698">
    <property type="entry name" value="Lipoyl_synth"/>
</dbReference>
<dbReference type="InterPro" id="IPR007197">
    <property type="entry name" value="rSAM"/>
</dbReference>
<dbReference type="NCBIfam" id="TIGR00510">
    <property type="entry name" value="lipA"/>
    <property type="match status" value="1"/>
</dbReference>
<dbReference type="NCBIfam" id="NF004019">
    <property type="entry name" value="PRK05481.1"/>
    <property type="match status" value="1"/>
</dbReference>
<dbReference type="NCBIfam" id="NF009544">
    <property type="entry name" value="PRK12928.1"/>
    <property type="match status" value="1"/>
</dbReference>
<dbReference type="PANTHER" id="PTHR10949">
    <property type="entry name" value="LIPOYL SYNTHASE"/>
    <property type="match status" value="1"/>
</dbReference>
<dbReference type="PANTHER" id="PTHR10949:SF0">
    <property type="entry name" value="LIPOYL SYNTHASE, MITOCHONDRIAL"/>
    <property type="match status" value="1"/>
</dbReference>
<dbReference type="Pfam" id="PF16881">
    <property type="entry name" value="LIAS_N"/>
    <property type="match status" value="1"/>
</dbReference>
<dbReference type="Pfam" id="PF04055">
    <property type="entry name" value="Radical_SAM"/>
    <property type="match status" value="1"/>
</dbReference>
<dbReference type="PIRSF" id="PIRSF005963">
    <property type="entry name" value="Lipoyl_synth"/>
    <property type="match status" value="1"/>
</dbReference>
<dbReference type="SFLD" id="SFLDF00271">
    <property type="entry name" value="lipoyl_synthase"/>
    <property type="match status" value="1"/>
</dbReference>
<dbReference type="SFLD" id="SFLDS00029">
    <property type="entry name" value="Radical_SAM"/>
    <property type="match status" value="1"/>
</dbReference>
<dbReference type="SMART" id="SM00729">
    <property type="entry name" value="Elp3"/>
    <property type="match status" value="1"/>
</dbReference>
<dbReference type="SUPFAM" id="SSF102114">
    <property type="entry name" value="Radical SAM enzymes"/>
    <property type="match status" value="1"/>
</dbReference>
<dbReference type="PROSITE" id="PS51918">
    <property type="entry name" value="RADICAL_SAM"/>
    <property type="match status" value="1"/>
</dbReference>
<gene>
    <name evidence="1" type="primary">lipA</name>
    <name type="ordered locus">RHE_CH01941</name>
</gene>
<keyword id="KW-0004">4Fe-4S</keyword>
<keyword id="KW-0963">Cytoplasm</keyword>
<keyword id="KW-0408">Iron</keyword>
<keyword id="KW-0411">Iron-sulfur</keyword>
<keyword id="KW-0479">Metal-binding</keyword>
<keyword id="KW-1185">Reference proteome</keyword>
<keyword id="KW-0949">S-adenosyl-L-methionine</keyword>
<keyword id="KW-0808">Transferase</keyword>
<reference key="1">
    <citation type="journal article" date="1997" name="FEMS Microbiol. Lett.">
        <title>Cloning and transcriptional analysis of the lipA (lipoic acid synthetase) gene from Rhizobium etli.</title>
        <authorList>
            <person name="Tate R."/>
            <person name="Riccio A."/>
            <person name="Iaccarino M."/>
            <person name="Patriarca E.J."/>
        </authorList>
    </citation>
    <scope>NUCLEOTIDE SEQUENCE [GENOMIC DNA]</scope>
    <source>
        <strain>CE3</strain>
    </source>
</reference>
<reference key="2">
    <citation type="journal article" date="2006" name="Proc. Natl. Acad. Sci. U.S.A.">
        <title>The partitioned Rhizobium etli genome: genetic and metabolic redundancy in seven interacting replicons.</title>
        <authorList>
            <person name="Gonzalez V."/>
            <person name="Santamaria R.I."/>
            <person name="Bustos P."/>
            <person name="Hernandez-Gonzalez I."/>
            <person name="Medrano-Soto A."/>
            <person name="Moreno-Hagelsieb G."/>
            <person name="Janga S.C."/>
            <person name="Ramirez M.A."/>
            <person name="Jimenez-Jacinto V."/>
            <person name="Collado-Vides J."/>
            <person name="Davila G."/>
        </authorList>
    </citation>
    <scope>NUCLEOTIDE SEQUENCE [LARGE SCALE GENOMIC DNA]</scope>
    <source>
        <strain>ATCC 51251 / DSM 11541 / JCM 21823 / NBRC 15573 / CFN 42</strain>
    </source>
</reference>
<feature type="chain" id="PRO_1000012259" description="Lipoyl synthase">
    <location>
        <begin position="1"/>
        <end position="323"/>
    </location>
</feature>
<feature type="domain" description="Radical SAM core" evidence="2">
    <location>
        <begin position="73"/>
        <end position="289"/>
    </location>
</feature>
<feature type="binding site" evidence="1">
    <location>
        <position position="61"/>
    </location>
    <ligand>
        <name>[4Fe-4S] cluster</name>
        <dbReference type="ChEBI" id="CHEBI:49883"/>
        <label>1</label>
    </ligand>
</feature>
<feature type="binding site" evidence="1">
    <location>
        <position position="66"/>
    </location>
    <ligand>
        <name>[4Fe-4S] cluster</name>
        <dbReference type="ChEBI" id="CHEBI:49883"/>
        <label>1</label>
    </ligand>
</feature>
<feature type="binding site" evidence="1">
    <location>
        <position position="72"/>
    </location>
    <ligand>
        <name>[4Fe-4S] cluster</name>
        <dbReference type="ChEBI" id="CHEBI:49883"/>
        <label>1</label>
    </ligand>
</feature>
<feature type="binding site" evidence="1">
    <location>
        <position position="87"/>
    </location>
    <ligand>
        <name>[4Fe-4S] cluster</name>
        <dbReference type="ChEBI" id="CHEBI:49883"/>
        <label>2</label>
        <note>4Fe-4S-S-AdoMet</note>
    </ligand>
</feature>
<feature type="binding site" evidence="1">
    <location>
        <position position="91"/>
    </location>
    <ligand>
        <name>[4Fe-4S] cluster</name>
        <dbReference type="ChEBI" id="CHEBI:49883"/>
        <label>2</label>
        <note>4Fe-4S-S-AdoMet</note>
    </ligand>
</feature>
<feature type="binding site" evidence="1">
    <location>
        <position position="94"/>
    </location>
    <ligand>
        <name>[4Fe-4S] cluster</name>
        <dbReference type="ChEBI" id="CHEBI:49883"/>
        <label>2</label>
        <note>4Fe-4S-S-AdoMet</note>
    </ligand>
</feature>
<feature type="binding site" evidence="1">
    <location>
        <position position="300"/>
    </location>
    <ligand>
        <name>[4Fe-4S] cluster</name>
        <dbReference type="ChEBI" id="CHEBI:49883"/>
        <label>1</label>
    </ligand>
</feature>
<feature type="sequence conflict" description="In Ref. 1; CAA72400." evidence="3" ref="1">
    <original>A</original>
    <variation>R</variation>
    <location>
        <position position="92"/>
    </location>
</feature>
<feature type="sequence conflict" description="In Ref. 1; CAA72400." evidence="3" ref="1">
    <original>K</original>
    <variation>Q</variation>
    <location>
        <position position="100"/>
    </location>
</feature>
<feature type="sequence conflict" description="In Ref. 1; CAA72400." evidence="3" ref="1">
    <original>EMGLS</original>
    <variation>RWAQ</variation>
    <location>
        <begin position="118"/>
        <end position="122"/>
    </location>
</feature>
<feature type="sequence conflict" description="In Ref. 1; CAA72400." evidence="3" ref="1">
    <original>E</original>
    <variation>Q</variation>
    <location>
        <position position="140"/>
    </location>
</feature>
<feature type="sequence conflict" description="In Ref. 1; CAA72400." evidence="3" ref="1">
    <original>KL</original>
    <variation>NV</variation>
    <location>
        <begin position="317"/>
        <end position="318"/>
    </location>
</feature>